<evidence type="ECO:0000250" key="1"/>
<evidence type="ECO:0000255" key="2">
    <source>
        <dbReference type="HAMAP-Rule" id="MF_00403"/>
    </source>
</evidence>
<evidence type="ECO:0000256" key="3">
    <source>
        <dbReference type="SAM" id="MobiDB-lite"/>
    </source>
</evidence>
<evidence type="ECO:0000305" key="4"/>
<reference key="1">
    <citation type="journal article" date="2008" name="PLoS ONE">
        <title>Survival in nuclear waste, extreme resistance, and potential applications gleaned from the genome sequence of Kineococcus radiotolerans SRS30216.</title>
        <authorList>
            <person name="Bagwell C.E."/>
            <person name="Bhat S."/>
            <person name="Hawkins G.M."/>
            <person name="Smith B.W."/>
            <person name="Biswas T."/>
            <person name="Hoover T.R."/>
            <person name="Saunders E."/>
            <person name="Han C.S."/>
            <person name="Tsodikov O.V."/>
            <person name="Shimkets L.J."/>
        </authorList>
    </citation>
    <scope>NUCLEOTIDE SEQUENCE [LARGE SCALE GENOMIC DNA]</scope>
    <source>
        <strain>ATCC BAA-149 / DSM 14245 / SRS30216</strain>
    </source>
</reference>
<comment type="function">
    <text evidence="2">With S4 and S5 plays an important role in translational accuracy.</text>
</comment>
<comment type="function">
    <text evidence="2">Interacts with and stabilizes bases of the 16S rRNA that are involved in tRNA selection in the A site and with the mRNA backbone. Located at the interface of the 30S and 50S subunits, it traverses the body of the 30S subunit contacting proteins on the other side and probably holding the rRNA structure together. The combined cluster of proteins S8, S12 and S17 appears to hold together the shoulder and platform of the 30S subunit.</text>
</comment>
<comment type="subunit">
    <text evidence="2">Part of the 30S ribosomal subunit. Contacts proteins S8 and S17. May interact with IF1 in the 30S initiation complex.</text>
</comment>
<comment type="similarity">
    <text evidence="2">Belongs to the universal ribosomal protein uS12 family.</text>
</comment>
<accession>A6W5T2</accession>
<dbReference type="EMBL" id="CP000750">
    <property type="protein sequence ID" value="ABS02171.1"/>
    <property type="molecule type" value="Genomic_DNA"/>
</dbReference>
<dbReference type="RefSeq" id="WP_012084987.1">
    <property type="nucleotide sequence ID" value="NC_009664.2"/>
</dbReference>
<dbReference type="SMR" id="A6W5T2"/>
<dbReference type="STRING" id="266940.Krad_0682"/>
<dbReference type="KEGG" id="kra:Krad_0682"/>
<dbReference type="eggNOG" id="COG0048">
    <property type="taxonomic scope" value="Bacteria"/>
</dbReference>
<dbReference type="HOGENOM" id="CLU_104295_1_2_11"/>
<dbReference type="OrthoDB" id="9802366at2"/>
<dbReference type="Proteomes" id="UP000001116">
    <property type="component" value="Chromosome"/>
</dbReference>
<dbReference type="GO" id="GO:0015935">
    <property type="term" value="C:small ribosomal subunit"/>
    <property type="evidence" value="ECO:0007669"/>
    <property type="project" value="InterPro"/>
</dbReference>
<dbReference type="GO" id="GO:0019843">
    <property type="term" value="F:rRNA binding"/>
    <property type="evidence" value="ECO:0007669"/>
    <property type="project" value="UniProtKB-UniRule"/>
</dbReference>
<dbReference type="GO" id="GO:0003735">
    <property type="term" value="F:structural constituent of ribosome"/>
    <property type="evidence" value="ECO:0007669"/>
    <property type="project" value="InterPro"/>
</dbReference>
<dbReference type="GO" id="GO:0000049">
    <property type="term" value="F:tRNA binding"/>
    <property type="evidence" value="ECO:0007669"/>
    <property type="project" value="UniProtKB-UniRule"/>
</dbReference>
<dbReference type="GO" id="GO:0006412">
    <property type="term" value="P:translation"/>
    <property type="evidence" value="ECO:0007669"/>
    <property type="project" value="UniProtKB-UniRule"/>
</dbReference>
<dbReference type="CDD" id="cd03368">
    <property type="entry name" value="Ribosomal_S12"/>
    <property type="match status" value="1"/>
</dbReference>
<dbReference type="FunFam" id="2.40.50.140:FF:000001">
    <property type="entry name" value="30S ribosomal protein S12"/>
    <property type="match status" value="1"/>
</dbReference>
<dbReference type="Gene3D" id="2.40.50.140">
    <property type="entry name" value="Nucleic acid-binding proteins"/>
    <property type="match status" value="1"/>
</dbReference>
<dbReference type="HAMAP" id="MF_00403_B">
    <property type="entry name" value="Ribosomal_uS12_B"/>
    <property type="match status" value="1"/>
</dbReference>
<dbReference type="InterPro" id="IPR012340">
    <property type="entry name" value="NA-bd_OB-fold"/>
</dbReference>
<dbReference type="InterPro" id="IPR006032">
    <property type="entry name" value="Ribosomal_uS12"/>
</dbReference>
<dbReference type="InterPro" id="IPR005679">
    <property type="entry name" value="Ribosomal_uS12_bac"/>
</dbReference>
<dbReference type="NCBIfam" id="TIGR00981">
    <property type="entry name" value="rpsL_bact"/>
    <property type="match status" value="1"/>
</dbReference>
<dbReference type="PANTHER" id="PTHR11652">
    <property type="entry name" value="30S RIBOSOMAL PROTEIN S12 FAMILY MEMBER"/>
    <property type="match status" value="1"/>
</dbReference>
<dbReference type="Pfam" id="PF00164">
    <property type="entry name" value="Ribosom_S12_S23"/>
    <property type="match status" value="1"/>
</dbReference>
<dbReference type="PIRSF" id="PIRSF002133">
    <property type="entry name" value="Ribosomal_S12/S23"/>
    <property type="match status" value="1"/>
</dbReference>
<dbReference type="PRINTS" id="PR01034">
    <property type="entry name" value="RIBOSOMALS12"/>
</dbReference>
<dbReference type="SUPFAM" id="SSF50249">
    <property type="entry name" value="Nucleic acid-binding proteins"/>
    <property type="match status" value="1"/>
</dbReference>
<dbReference type="PROSITE" id="PS00055">
    <property type="entry name" value="RIBOSOMAL_S12"/>
    <property type="match status" value="1"/>
</dbReference>
<sequence>MPTIQQLVRKGREDKVVKTKTPALKGSPQRRGVCTRVYTTTPKKPNSALRKVARVKLTSGIEVTAYIPGVGHNLQEHSMVLVRGGRVKDLPGVRYKIVRGSLDTQGVKNRKQARSRYGAKKEKS</sequence>
<gene>
    <name evidence="2" type="primary">rpsL</name>
    <name type="ordered locus">Krad_0682</name>
</gene>
<name>RS12_KINRD</name>
<protein>
    <recommendedName>
        <fullName evidence="2">Small ribosomal subunit protein uS12</fullName>
    </recommendedName>
    <alternativeName>
        <fullName evidence="4">30S ribosomal protein S12</fullName>
    </alternativeName>
</protein>
<keyword id="KW-0488">Methylation</keyword>
<keyword id="KW-1185">Reference proteome</keyword>
<keyword id="KW-0687">Ribonucleoprotein</keyword>
<keyword id="KW-0689">Ribosomal protein</keyword>
<keyword id="KW-0694">RNA-binding</keyword>
<keyword id="KW-0699">rRNA-binding</keyword>
<keyword id="KW-0820">tRNA-binding</keyword>
<proteinExistence type="inferred from homology"/>
<organism>
    <name type="scientific">Kineococcus radiotolerans (strain ATCC BAA-149 / DSM 14245 / SRS30216)</name>
    <dbReference type="NCBI Taxonomy" id="266940"/>
    <lineage>
        <taxon>Bacteria</taxon>
        <taxon>Bacillati</taxon>
        <taxon>Actinomycetota</taxon>
        <taxon>Actinomycetes</taxon>
        <taxon>Kineosporiales</taxon>
        <taxon>Kineosporiaceae</taxon>
        <taxon>Kineococcus</taxon>
    </lineage>
</organism>
<feature type="chain" id="PRO_1000080400" description="Small ribosomal subunit protein uS12">
    <location>
        <begin position="1"/>
        <end position="124"/>
    </location>
</feature>
<feature type="region of interest" description="Disordered" evidence="3">
    <location>
        <begin position="1"/>
        <end position="32"/>
    </location>
</feature>
<feature type="region of interest" description="Disordered" evidence="3">
    <location>
        <begin position="105"/>
        <end position="124"/>
    </location>
</feature>
<feature type="compositionally biased region" description="Basic residues" evidence="3">
    <location>
        <begin position="108"/>
        <end position="118"/>
    </location>
</feature>
<feature type="modified residue" description="3-methylthioaspartic acid" evidence="1">
    <location>
        <position position="89"/>
    </location>
</feature>